<comment type="function">
    <text evidence="1">The glycine cleavage system catalyzes the degradation of glycine.</text>
</comment>
<comment type="catalytic activity">
    <reaction evidence="1">
        <text>N(6)-[(R)-S(8)-aminomethyldihydrolipoyl]-L-lysyl-[protein] + (6S)-5,6,7,8-tetrahydrofolate = N(6)-[(R)-dihydrolipoyl]-L-lysyl-[protein] + (6R)-5,10-methylene-5,6,7,8-tetrahydrofolate + NH4(+)</text>
        <dbReference type="Rhea" id="RHEA:16945"/>
        <dbReference type="Rhea" id="RHEA-COMP:10475"/>
        <dbReference type="Rhea" id="RHEA-COMP:10492"/>
        <dbReference type="ChEBI" id="CHEBI:15636"/>
        <dbReference type="ChEBI" id="CHEBI:28938"/>
        <dbReference type="ChEBI" id="CHEBI:57453"/>
        <dbReference type="ChEBI" id="CHEBI:83100"/>
        <dbReference type="ChEBI" id="CHEBI:83143"/>
        <dbReference type="EC" id="2.1.2.10"/>
    </reaction>
</comment>
<comment type="subunit">
    <text evidence="1">The glycine cleavage system is composed of four proteins: P, T, L and H.</text>
</comment>
<comment type="similarity">
    <text evidence="1">Belongs to the GcvT family.</text>
</comment>
<name>GCST_ECOSM</name>
<feature type="chain" id="PRO_1000119201" description="Aminomethyltransferase">
    <location>
        <begin position="1"/>
        <end position="364"/>
    </location>
</feature>
<keyword id="KW-0032">Aminotransferase</keyword>
<keyword id="KW-0808">Transferase</keyword>
<protein>
    <recommendedName>
        <fullName evidence="1">Aminomethyltransferase</fullName>
        <ecNumber evidence="1">2.1.2.10</ecNumber>
    </recommendedName>
    <alternativeName>
        <fullName evidence="1">Glycine cleavage system T protein</fullName>
    </alternativeName>
</protein>
<dbReference type="EC" id="2.1.2.10" evidence="1"/>
<dbReference type="EMBL" id="CP000970">
    <property type="protein sequence ID" value="ACB19319.1"/>
    <property type="molecule type" value="Genomic_DNA"/>
</dbReference>
<dbReference type="RefSeq" id="WP_000068700.1">
    <property type="nucleotide sequence ID" value="NC_010498.1"/>
</dbReference>
<dbReference type="SMR" id="B1LDA5"/>
<dbReference type="KEGG" id="ecm:EcSMS35_3037"/>
<dbReference type="HOGENOM" id="CLU_007884_10_2_6"/>
<dbReference type="Proteomes" id="UP000007011">
    <property type="component" value="Chromosome"/>
</dbReference>
<dbReference type="GO" id="GO:0005829">
    <property type="term" value="C:cytosol"/>
    <property type="evidence" value="ECO:0007669"/>
    <property type="project" value="TreeGrafter"/>
</dbReference>
<dbReference type="GO" id="GO:0005960">
    <property type="term" value="C:glycine cleavage complex"/>
    <property type="evidence" value="ECO:0007669"/>
    <property type="project" value="InterPro"/>
</dbReference>
<dbReference type="GO" id="GO:0004047">
    <property type="term" value="F:aminomethyltransferase activity"/>
    <property type="evidence" value="ECO:0007669"/>
    <property type="project" value="UniProtKB-UniRule"/>
</dbReference>
<dbReference type="GO" id="GO:0008483">
    <property type="term" value="F:transaminase activity"/>
    <property type="evidence" value="ECO:0007669"/>
    <property type="project" value="UniProtKB-KW"/>
</dbReference>
<dbReference type="GO" id="GO:0019464">
    <property type="term" value="P:glycine decarboxylation via glycine cleavage system"/>
    <property type="evidence" value="ECO:0007669"/>
    <property type="project" value="UniProtKB-UniRule"/>
</dbReference>
<dbReference type="FunFam" id="2.40.30.110:FF:000001">
    <property type="entry name" value="Aminomethyltransferase"/>
    <property type="match status" value="1"/>
</dbReference>
<dbReference type="FunFam" id="3.30.70.1400:FF:000001">
    <property type="entry name" value="Aminomethyltransferase"/>
    <property type="match status" value="1"/>
</dbReference>
<dbReference type="FunFam" id="4.10.1250.10:FF:000001">
    <property type="entry name" value="Aminomethyltransferase"/>
    <property type="match status" value="1"/>
</dbReference>
<dbReference type="Gene3D" id="2.40.30.110">
    <property type="entry name" value="Aminomethyltransferase beta-barrel domains"/>
    <property type="match status" value="1"/>
</dbReference>
<dbReference type="Gene3D" id="3.30.70.1400">
    <property type="entry name" value="Aminomethyltransferase beta-barrel domains"/>
    <property type="match status" value="1"/>
</dbReference>
<dbReference type="Gene3D" id="4.10.1250.10">
    <property type="entry name" value="Aminomethyltransferase fragment"/>
    <property type="match status" value="1"/>
</dbReference>
<dbReference type="Gene3D" id="3.30.1360.120">
    <property type="entry name" value="Probable tRNA modification gtpase trme, domain 1"/>
    <property type="match status" value="1"/>
</dbReference>
<dbReference type="HAMAP" id="MF_00259">
    <property type="entry name" value="GcvT"/>
    <property type="match status" value="1"/>
</dbReference>
<dbReference type="InterPro" id="IPR006223">
    <property type="entry name" value="GCS_T"/>
</dbReference>
<dbReference type="InterPro" id="IPR022903">
    <property type="entry name" value="GCS_T_bac"/>
</dbReference>
<dbReference type="InterPro" id="IPR013977">
    <property type="entry name" value="GCST_C"/>
</dbReference>
<dbReference type="InterPro" id="IPR006222">
    <property type="entry name" value="GCV_T_N"/>
</dbReference>
<dbReference type="InterPro" id="IPR028896">
    <property type="entry name" value="GcvT/YgfZ/DmdA"/>
</dbReference>
<dbReference type="InterPro" id="IPR029043">
    <property type="entry name" value="GcvT/YgfZ_C"/>
</dbReference>
<dbReference type="InterPro" id="IPR027266">
    <property type="entry name" value="TrmE/GcvT_dom1"/>
</dbReference>
<dbReference type="NCBIfam" id="TIGR00528">
    <property type="entry name" value="gcvT"/>
    <property type="match status" value="1"/>
</dbReference>
<dbReference type="NCBIfam" id="NF001567">
    <property type="entry name" value="PRK00389.1"/>
    <property type="match status" value="1"/>
</dbReference>
<dbReference type="PANTHER" id="PTHR43757">
    <property type="entry name" value="AMINOMETHYLTRANSFERASE"/>
    <property type="match status" value="1"/>
</dbReference>
<dbReference type="PANTHER" id="PTHR43757:SF2">
    <property type="entry name" value="AMINOMETHYLTRANSFERASE, MITOCHONDRIAL"/>
    <property type="match status" value="1"/>
</dbReference>
<dbReference type="Pfam" id="PF01571">
    <property type="entry name" value="GCV_T"/>
    <property type="match status" value="1"/>
</dbReference>
<dbReference type="Pfam" id="PF08669">
    <property type="entry name" value="GCV_T_C"/>
    <property type="match status" value="1"/>
</dbReference>
<dbReference type="PIRSF" id="PIRSF006487">
    <property type="entry name" value="GcvT"/>
    <property type="match status" value="1"/>
</dbReference>
<dbReference type="SUPFAM" id="SSF101790">
    <property type="entry name" value="Aminomethyltransferase beta-barrel domain"/>
    <property type="match status" value="1"/>
</dbReference>
<dbReference type="SUPFAM" id="SSF103025">
    <property type="entry name" value="Folate-binding domain"/>
    <property type="match status" value="1"/>
</dbReference>
<gene>
    <name evidence="1" type="primary">gcvT</name>
    <name type="ordered locus">EcSMS35_3037</name>
</gene>
<accession>B1LDA5</accession>
<sequence length="364" mass="40119">MAQQTPLYEQHTLCGARMVDFHGWMMPLHYGSQIDEHHAVRTDAGMFDVSHMTIVDLRGSRTREFLRYLLANDVAKLTKSGKALYSGMLNASGGVIDDLIVYYFTEDFFRLVVNSATREKDLSWITQHAEPFGIEITVRDDLSMIAVQGPNAQAKAATLFNDAQRQAVEGMKPFFGVQAGDLFIATTGYTGEAGYEIALPNEKAADFWRALVEAGVKPCGLGARDTLRLEAGMNLYGQEMDETISPLAANMGWTIAWEPADRDFIGREALEAQREHGTEKLVGLVMTEKGVLRNELPVRFTDAQGNQHEGIITSGTFSPTLGYSIALARVPEGIGETAIVQIRNREMPVKVTKPVFVRNGKAVA</sequence>
<evidence type="ECO:0000255" key="1">
    <source>
        <dbReference type="HAMAP-Rule" id="MF_00259"/>
    </source>
</evidence>
<proteinExistence type="inferred from homology"/>
<organism>
    <name type="scientific">Escherichia coli (strain SMS-3-5 / SECEC)</name>
    <dbReference type="NCBI Taxonomy" id="439855"/>
    <lineage>
        <taxon>Bacteria</taxon>
        <taxon>Pseudomonadati</taxon>
        <taxon>Pseudomonadota</taxon>
        <taxon>Gammaproteobacteria</taxon>
        <taxon>Enterobacterales</taxon>
        <taxon>Enterobacteriaceae</taxon>
        <taxon>Escherichia</taxon>
    </lineage>
</organism>
<reference key="1">
    <citation type="journal article" date="2008" name="J. Bacteriol.">
        <title>Insights into the environmental resistance gene pool from the genome sequence of the multidrug-resistant environmental isolate Escherichia coli SMS-3-5.</title>
        <authorList>
            <person name="Fricke W.F."/>
            <person name="Wright M.S."/>
            <person name="Lindell A.H."/>
            <person name="Harkins D.M."/>
            <person name="Baker-Austin C."/>
            <person name="Ravel J."/>
            <person name="Stepanauskas R."/>
        </authorList>
    </citation>
    <scope>NUCLEOTIDE SEQUENCE [LARGE SCALE GENOMIC DNA]</scope>
    <source>
        <strain>SMS-3-5 / SECEC</strain>
    </source>
</reference>